<accession>Q96NL8</accession>
<accession>F4Y588</accession>
<dbReference type="EMBL" id="AK055162">
    <property type="protein sequence ID" value="BAB70866.1"/>
    <property type="molecule type" value="mRNA"/>
</dbReference>
<dbReference type="EMBL" id="GQ240139">
    <property type="protein sequence ID" value="ADE62519.1"/>
    <property type="molecule type" value="mRNA"/>
</dbReference>
<dbReference type="EMBL" id="AP003466">
    <property type="status" value="NOT_ANNOTATED_CDS"/>
    <property type="molecule type" value="Genomic_DNA"/>
</dbReference>
<dbReference type="EMBL" id="AC024995">
    <property type="status" value="NOT_ANNOTATED_CDS"/>
    <property type="molecule type" value="Genomic_DNA"/>
</dbReference>
<dbReference type="EMBL" id="CH471060">
    <property type="protein sequence ID" value="EAW91744.1"/>
    <property type="molecule type" value="Genomic_DNA"/>
</dbReference>
<dbReference type="EMBL" id="CH471060">
    <property type="protein sequence ID" value="EAW91745.1"/>
    <property type="molecule type" value="Genomic_DNA"/>
</dbReference>
<dbReference type="CCDS" id="CCDS6268.1"/>
<dbReference type="RefSeq" id="NP_808880.1">
    <property type="nucleotide sequence ID" value="NM_177965.4"/>
</dbReference>
<dbReference type="BioGRID" id="127610">
    <property type="interactions" value="7"/>
</dbReference>
<dbReference type="FunCoup" id="Q96NL8">
    <property type="interactions" value="394"/>
</dbReference>
<dbReference type="IntAct" id="Q96NL8">
    <property type="interactions" value="28"/>
</dbReference>
<dbReference type="STRING" id="9606.ENSP00000286688"/>
<dbReference type="iPTMnet" id="Q96NL8"/>
<dbReference type="PhosphoSitePlus" id="Q96NL8"/>
<dbReference type="BioMuta" id="C8orf37"/>
<dbReference type="DMDM" id="74732592"/>
<dbReference type="jPOST" id="Q96NL8"/>
<dbReference type="MassIVE" id="Q96NL8"/>
<dbReference type="PaxDb" id="9606-ENSP00000286688"/>
<dbReference type="PeptideAtlas" id="Q96NL8"/>
<dbReference type="ProteomicsDB" id="77536"/>
<dbReference type="Pumba" id="Q96NL8"/>
<dbReference type="Antibodypedia" id="12959">
    <property type="antibodies" value="40 antibodies from 8 providers"/>
</dbReference>
<dbReference type="DNASU" id="157657"/>
<dbReference type="Ensembl" id="ENST00000286688.6">
    <property type="protein sequence ID" value="ENSP00000286688.5"/>
    <property type="gene ID" value="ENSG00000156172.6"/>
</dbReference>
<dbReference type="GeneID" id="157657"/>
<dbReference type="KEGG" id="hsa:157657"/>
<dbReference type="MANE-Select" id="ENST00000286688.6">
    <property type="protein sequence ID" value="ENSP00000286688.5"/>
    <property type="RefSeq nucleotide sequence ID" value="NM_177965.4"/>
    <property type="RefSeq protein sequence ID" value="NP_808880.1"/>
</dbReference>
<dbReference type="UCSC" id="uc003yho.3">
    <property type="organism name" value="human"/>
</dbReference>
<dbReference type="AGR" id="HGNC:27232"/>
<dbReference type="CTD" id="157657"/>
<dbReference type="DisGeNET" id="157657"/>
<dbReference type="GeneCards" id="CFAP418"/>
<dbReference type="GeneReviews" id="CFAP418"/>
<dbReference type="HGNC" id="HGNC:27232">
    <property type="gene designation" value="CFAP418"/>
</dbReference>
<dbReference type="HPA" id="ENSG00000156172">
    <property type="expression patterns" value="Low tissue specificity"/>
</dbReference>
<dbReference type="MalaCards" id="CFAP418"/>
<dbReference type="MIM" id="614477">
    <property type="type" value="gene"/>
</dbReference>
<dbReference type="MIM" id="614500">
    <property type="type" value="phenotype"/>
</dbReference>
<dbReference type="MIM" id="617406">
    <property type="type" value="phenotype"/>
</dbReference>
<dbReference type="neXtProt" id="NX_Q96NL8"/>
<dbReference type="OpenTargets" id="ENSG00000156172"/>
<dbReference type="Orphanet" id="110">
    <property type="disease" value="Bardet-Biedl syndrome"/>
</dbReference>
<dbReference type="Orphanet" id="1872">
    <property type="disease" value="Cone rod dystrophy"/>
</dbReference>
<dbReference type="Orphanet" id="791">
    <property type="disease" value="Retinitis pigmentosa"/>
</dbReference>
<dbReference type="VEuPathDB" id="HostDB:ENSG00000156172"/>
<dbReference type="eggNOG" id="ENOG502S1KM">
    <property type="taxonomic scope" value="Eukaryota"/>
</dbReference>
<dbReference type="GeneTree" id="ENSGT00390000006173"/>
<dbReference type="HOGENOM" id="CLU_092833_0_0_1"/>
<dbReference type="InParanoid" id="Q96NL8"/>
<dbReference type="OMA" id="AHGKRCC"/>
<dbReference type="OrthoDB" id="259905at2759"/>
<dbReference type="PAN-GO" id="Q96NL8">
    <property type="GO annotations" value="1 GO annotation based on evolutionary models"/>
</dbReference>
<dbReference type="PhylomeDB" id="Q96NL8"/>
<dbReference type="TreeFam" id="TF328851"/>
<dbReference type="PathwayCommons" id="Q96NL8"/>
<dbReference type="SignaLink" id="Q96NL8"/>
<dbReference type="BioGRID-ORCS" id="157657">
    <property type="hits" value="13 hits in 1146 CRISPR screens"/>
</dbReference>
<dbReference type="GenomeRNAi" id="157657"/>
<dbReference type="Pharos" id="Q96NL8">
    <property type="development level" value="Tbio"/>
</dbReference>
<dbReference type="PRO" id="PR:Q96NL8"/>
<dbReference type="Proteomes" id="UP000005640">
    <property type="component" value="Chromosome 8"/>
</dbReference>
<dbReference type="RNAct" id="Q96NL8">
    <property type="molecule type" value="protein"/>
</dbReference>
<dbReference type="Bgee" id="ENSG00000156172">
    <property type="expression patterns" value="Expressed in secondary oocyte and 145 other cell types or tissues"/>
</dbReference>
<dbReference type="GO" id="GO:0097546">
    <property type="term" value="C:ciliary base"/>
    <property type="evidence" value="ECO:0000314"/>
    <property type="project" value="UniProtKB"/>
</dbReference>
<dbReference type="GO" id="GO:0005737">
    <property type="term" value="C:cytoplasm"/>
    <property type="evidence" value="ECO:0000314"/>
    <property type="project" value="UniProtKB"/>
</dbReference>
<dbReference type="GO" id="GO:0005829">
    <property type="term" value="C:cytosol"/>
    <property type="evidence" value="ECO:0000318"/>
    <property type="project" value="GO_Central"/>
</dbReference>
<dbReference type="GO" id="GO:0001917">
    <property type="term" value="C:photoreceptor inner segment"/>
    <property type="evidence" value="ECO:0000250"/>
    <property type="project" value="UniProtKB"/>
</dbReference>
<dbReference type="GO" id="GO:0008594">
    <property type="term" value="P:photoreceptor cell morphogenesis"/>
    <property type="evidence" value="ECO:0000250"/>
    <property type="project" value="UniProtKB"/>
</dbReference>
<dbReference type="InterPro" id="IPR029239">
    <property type="entry name" value="CFAP418"/>
</dbReference>
<dbReference type="PANTHER" id="PTHR33958:SF1">
    <property type="entry name" value="CILIA- AND FLAGELLA-ASSOCIATED PROTEIN 418"/>
    <property type="match status" value="1"/>
</dbReference>
<dbReference type="PANTHER" id="PTHR33958">
    <property type="entry name" value="PROTEIN C8ORF37"/>
    <property type="match status" value="1"/>
</dbReference>
<dbReference type="Pfam" id="PF14996">
    <property type="entry name" value="RMP"/>
    <property type="match status" value="1"/>
</dbReference>
<proteinExistence type="evidence at protein level"/>
<feature type="chain" id="PRO_0000271058" description="Cilia- and flagella-associated protein 418">
    <location>
        <begin position="1"/>
        <end position="207"/>
    </location>
</feature>
<feature type="region of interest" description="Required for interaction with FAM161A" evidence="6">
    <location>
        <begin position="1"/>
        <end position="75"/>
    </location>
</feature>
<feature type="region of interest" description="Disordered" evidence="2">
    <location>
        <begin position="26"/>
        <end position="52"/>
    </location>
</feature>
<feature type="compositionally biased region" description="Basic and acidic residues" evidence="2">
    <location>
        <begin position="39"/>
        <end position="52"/>
    </location>
</feature>
<feature type="sequence variant" id="VAR_033683" description="In dbSNP:rs36096184.">
    <original>P</original>
    <variation>A</variation>
    <location>
        <position position="19"/>
    </location>
</feature>
<feature type="sequence variant" id="VAR_067305" description="In CORD16 and BBS21; does not affect interaction with FAM161A.; dbSNP:rs387907136." evidence="3 4 6">
    <original>R</original>
    <variation>W</variation>
    <location>
        <position position="177"/>
    </location>
</feature>
<feature type="sequence variant" id="VAR_067306" description="In RP64; does not affect interaction with FAM161A.; dbSNP:rs387907137." evidence="3 6">
    <original>Q</original>
    <variation>R</variation>
    <location>
        <position position="182"/>
    </location>
</feature>
<evidence type="ECO:0000250" key="1">
    <source>
        <dbReference type="UniProtKB" id="Q3UJP5"/>
    </source>
</evidence>
<evidence type="ECO:0000256" key="2">
    <source>
        <dbReference type="SAM" id="MobiDB-lite"/>
    </source>
</evidence>
<evidence type="ECO:0000269" key="3">
    <source>
    </source>
</evidence>
<evidence type="ECO:0000269" key="4">
    <source>
    </source>
</evidence>
<evidence type="ECO:0000269" key="5">
    <source>
    </source>
</evidence>
<evidence type="ECO:0000269" key="6">
    <source>
    </source>
</evidence>
<evidence type="ECO:0000312" key="7">
    <source>
        <dbReference type="HGNC" id="HGNC:27232"/>
    </source>
</evidence>
<gene>
    <name evidence="7" type="primary">CFAP418</name>
    <name type="synonym">C8orf37</name>
    <name type="synonym">smalltalk</name>
</gene>
<reference key="1">
    <citation type="journal article" date="2004" name="Nat. Genet.">
        <title>Complete sequencing and characterization of 21,243 full-length human cDNAs.</title>
        <authorList>
            <person name="Ota T."/>
            <person name="Suzuki Y."/>
            <person name="Nishikawa T."/>
            <person name="Otsuki T."/>
            <person name="Sugiyama T."/>
            <person name="Irie R."/>
            <person name="Wakamatsu A."/>
            <person name="Hayashi K."/>
            <person name="Sato H."/>
            <person name="Nagai K."/>
            <person name="Kimura K."/>
            <person name="Makita H."/>
            <person name="Sekine M."/>
            <person name="Obayashi M."/>
            <person name="Nishi T."/>
            <person name="Shibahara T."/>
            <person name="Tanaka T."/>
            <person name="Ishii S."/>
            <person name="Yamamoto J."/>
            <person name="Saito K."/>
            <person name="Kawai Y."/>
            <person name="Isono Y."/>
            <person name="Nakamura Y."/>
            <person name="Nagahari K."/>
            <person name="Murakami K."/>
            <person name="Yasuda T."/>
            <person name="Iwayanagi T."/>
            <person name="Wagatsuma M."/>
            <person name="Shiratori A."/>
            <person name="Sudo H."/>
            <person name="Hosoiri T."/>
            <person name="Kaku Y."/>
            <person name="Kodaira H."/>
            <person name="Kondo H."/>
            <person name="Sugawara M."/>
            <person name="Takahashi M."/>
            <person name="Kanda K."/>
            <person name="Yokoi T."/>
            <person name="Furuya T."/>
            <person name="Kikkawa E."/>
            <person name="Omura Y."/>
            <person name="Abe K."/>
            <person name="Kamihara K."/>
            <person name="Katsuta N."/>
            <person name="Sato K."/>
            <person name="Tanikawa M."/>
            <person name="Yamazaki M."/>
            <person name="Ninomiya K."/>
            <person name="Ishibashi T."/>
            <person name="Yamashita H."/>
            <person name="Murakawa K."/>
            <person name="Fujimori K."/>
            <person name="Tanai H."/>
            <person name="Kimata M."/>
            <person name="Watanabe M."/>
            <person name="Hiraoka S."/>
            <person name="Chiba Y."/>
            <person name="Ishida S."/>
            <person name="Ono Y."/>
            <person name="Takiguchi S."/>
            <person name="Watanabe S."/>
            <person name="Yosida M."/>
            <person name="Hotuta T."/>
            <person name="Kusano J."/>
            <person name="Kanehori K."/>
            <person name="Takahashi-Fujii A."/>
            <person name="Hara H."/>
            <person name="Tanase T.-O."/>
            <person name="Nomura Y."/>
            <person name="Togiya S."/>
            <person name="Komai F."/>
            <person name="Hara R."/>
            <person name="Takeuchi K."/>
            <person name="Arita M."/>
            <person name="Imose N."/>
            <person name="Musashino K."/>
            <person name="Yuuki H."/>
            <person name="Oshima A."/>
            <person name="Sasaki N."/>
            <person name="Aotsuka S."/>
            <person name="Yoshikawa Y."/>
            <person name="Matsunawa H."/>
            <person name="Ichihara T."/>
            <person name="Shiohata N."/>
            <person name="Sano S."/>
            <person name="Moriya S."/>
            <person name="Momiyama H."/>
            <person name="Satoh N."/>
            <person name="Takami S."/>
            <person name="Terashima Y."/>
            <person name="Suzuki O."/>
            <person name="Nakagawa S."/>
            <person name="Senoh A."/>
            <person name="Mizoguchi H."/>
            <person name="Goto Y."/>
            <person name="Shimizu F."/>
            <person name="Wakebe H."/>
            <person name="Hishigaki H."/>
            <person name="Watanabe T."/>
            <person name="Sugiyama A."/>
            <person name="Takemoto M."/>
            <person name="Kawakami B."/>
            <person name="Yamazaki M."/>
            <person name="Watanabe K."/>
            <person name="Kumagai A."/>
            <person name="Itakura S."/>
            <person name="Fukuzumi Y."/>
            <person name="Fujimori Y."/>
            <person name="Komiyama M."/>
            <person name="Tashiro H."/>
            <person name="Tanigami A."/>
            <person name="Fujiwara T."/>
            <person name="Ono T."/>
            <person name="Yamada K."/>
            <person name="Fujii Y."/>
            <person name="Ozaki K."/>
            <person name="Hirao M."/>
            <person name="Ohmori Y."/>
            <person name="Kawabata A."/>
            <person name="Hikiji T."/>
            <person name="Kobatake N."/>
            <person name="Inagaki H."/>
            <person name="Ikema Y."/>
            <person name="Okamoto S."/>
            <person name="Okitani R."/>
            <person name="Kawakami T."/>
            <person name="Noguchi S."/>
            <person name="Itoh T."/>
            <person name="Shigeta K."/>
            <person name="Senba T."/>
            <person name="Matsumura K."/>
            <person name="Nakajima Y."/>
            <person name="Mizuno T."/>
            <person name="Morinaga M."/>
            <person name="Sasaki M."/>
            <person name="Togashi T."/>
            <person name="Oyama M."/>
            <person name="Hata H."/>
            <person name="Watanabe M."/>
            <person name="Komatsu T."/>
            <person name="Mizushima-Sugano J."/>
            <person name="Satoh T."/>
            <person name="Shirai Y."/>
            <person name="Takahashi Y."/>
            <person name="Nakagawa K."/>
            <person name="Okumura K."/>
            <person name="Nagase T."/>
            <person name="Nomura N."/>
            <person name="Kikuchi H."/>
            <person name="Masuho Y."/>
            <person name="Yamashita R."/>
            <person name="Nakai K."/>
            <person name="Yada T."/>
            <person name="Nakamura Y."/>
            <person name="Ohara O."/>
            <person name="Isogai T."/>
            <person name="Sugano S."/>
        </authorList>
    </citation>
    <scope>NUCLEOTIDE SEQUENCE [LARGE SCALE MRNA]</scope>
    <source>
        <tissue>Brain</tissue>
    </source>
</reference>
<reference key="2">
    <citation type="submission" date="2009-06" db="EMBL/GenBank/DDBJ databases">
        <title>The smalltalk gene overlaps the 5' end of the tospeak gene implicated in vocal development.</title>
        <authorList>
            <person name="Clarke R.A."/>
            <person name="Zhao Z."/>
            <person name="Fang Z.M."/>
        </authorList>
    </citation>
    <scope>NUCLEOTIDE SEQUENCE [MRNA]</scope>
</reference>
<reference key="3">
    <citation type="journal article" date="2006" name="Nature">
        <title>DNA sequence and analysis of human chromosome 8.</title>
        <authorList>
            <person name="Nusbaum C."/>
            <person name="Mikkelsen T.S."/>
            <person name="Zody M.C."/>
            <person name="Asakawa S."/>
            <person name="Taudien S."/>
            <person name="Garber M."/>
            <person name="Kodira C.D."/>
            <person name="Schueler M.G."/>
            <person name="Shimizu A."/>
            <person name="Whittaker C.A."/>
            <person name="Chang J.L."/>
            <person name="Cuomo C.A."/>
            <person name="Dewar K."/>
            <person name="FitzGerald M.G."/>
            <person name="Yang X."/>
            <person name="Allen N.R."/>
            <person name="Anderson S."/>
            <person name="Asakawa T."/>
            <person name="Blechschmidt K."/>
            <person name="Bloom T."/>
            <person name="Borowsky M.L."/>
            <person name="Butler J."/>
            <person name="Cook A."/>
            <person name="Corum B."/>
            <person name="DeArellano K."/>
            <person name="DeCaprio D."/>
            <person name="Dooley K.T."/>
            <person name="Dorris L. III"/>
            <person name="Engels R."/>
            <person name="Gloeckner G."/>
            <person name="Hafez N."/>
            <person name="Hagopian D.S."/>
            <person name="Hall J.L."/>
            <person name="Ishikawa S.K."/>
            <person name="Jaffe D.B."/>
            <person name="Kamat A."/>
            <person name="Kudoh J."/>
            <person name="Lehmann R."/>
            <person name="Lokitsang T."/>
            <person name="Macdonald P."/>
            <person name="Major J.E."/>
            <person name="Matthews C.D."/>
            <person name="Mauceli E."/>
            <person name="Menzel U."/>
            <person name="Mihalev A.H."/>
            <person name="Minoshima S."/>
            <person name="Murayama Y."/>
            <person name="Naylor J.W."/>
            <person name="Nicol R."/>
            <person name="Nguyen C."/>
            <person name="O'Leary S.B."/>
            <person name="O'Neill K."/>
            <person name="Parker S.C.J."/>
            <person name="Polley A."/>
            <person name="Raymond C.K."/>
            <person name="Reichwald K."/>
            <person name="Rodriguez J."/>
            <person name="Sasaki T."/>
            <person name="Schilhabel M."/>
            <person name="Siddiqui R."/>
            <person name="Smith C.L."/>
            <person name="Sneddon T.P."/>
            <person name="Talamas J.A."/>
            <person name="Tenzin P."/>
            <person name="Topham K."/>
            <person name="Venkataraman V."/>
            <person name="Wen G."/>
            <person name="Yamazaki S."/>
            <person name="Young S.K."/>
            <person name="Zeng Q."/>
            <person name="Zimmer A.R."/>
            <person name="Rosenthal A."/>
            <person name="Birren B.W."/>
            <person name="Platzer M."/>
            <person name="Shimizu N."/>
            <person name="Lander E.S."/>
        </authorList>
    </citation>
    <scope>NUCLEOTIDE SEQUENCE [LARGE SCALE GENOMIC DNA]</scope>
</reference>
<reference key="4">
    <citation type="submission" date="2005-07" db="EMBL/GenBank/DDBJ databases">
        <authorList>
            <person name="Mural R.J."/>
            <person name="Istrail S."/>
            <person name="Sutton G.G."/>
            <person name="Florea L."/>
            <person name="Halpern A.L."/>
            <person name="Mobarry C.M."/>
            <person name="Lippert R."/>
            <person name="Walenz B."/>
            <person name="Shatkay H."/>
            <person name="Dew I."/>
            <person name="Miller J.R."/>
            <person name="Flanigan M.J."/>
            <person name="Edwards N.J."/>
            <person name="Bolanos R."/>
            <person name="Fasulo D."/>
            <person name="Halldorsson B.V."/>
            <person name="Hannenhalli S."/>
            <person name="Turner R."/>
            <person name="Yooseph S."/>
            <person name="Lu F."/>
            <person name="Nusskern D.R."/>
            <person name="Shue B.C."/>
            <person name="Zheng X.H."/>
            <person name="Zhong F."/>
            <person name="Delcher A.L."/>
            <person name="Huson D.H."/>
            <person name="Kravitz S.A."/>
            <person name="Mouchard L."/>
            <person name="Reinert K."/>
            <person name="Remington K.A."/>
            <person name="Clark A.G."/>
            <person name="Waterman M.S."/>
            <person name="Eichler E.E."/>
            <person name="Adams M.D."/>
            <person name="Hunkapiller M.W."/>
            <person name="Myers E.W."/>
            <person name="Venter J.C."/>
        </authorList>
    </citation>
    <scope>NUCLEOTIDE SEQUENCE [LARGE SCALE GENOMIC DNA]</scope>
</reference>
<reference key="5">
    <citation type="journal article" date="2012" name="Am. J. Hum. Genet.">
        <title>Mutations in C8orf37, encoding a ciliary protein, are associated with autosomal-recessive retinal dystrophies with early macular involvement.</title>
        <authorList>
            <person name="Estrada-Cuzcano A."/>
            <person name="Neveling K."/>
            <person name="Kohl S."/>
            <person name="Banin E."/>
            <person name="Rotenstreich Y."/>
            <person name="Sharon D."/>
            <person name="Falik-Zaccai T.C."/>
            <person name="Hipp S."/>
            <person name="Roepman R."/>
            <person name="Wissinger B."/>
            <person name="Letteboer S.J."/>
            <person name="Mans D.A."/>
            <person name="Blokland E.A."/>
            <person name="Kwint M.P."/>
            <person name="Gijsen S.J."/>
            <person name="van Huet R.A."/>
            <person name="Collin R.W."/>
            <person name="Scheffer H."/>
            <person name="Veltman J.A."/>
            <person name="Zrenner E."/>
            <person name="den Hollander A.I."/>
            <person name="Klevering B.J."/>
            <person name="Cremers F.P."/>
        </authorList>
    </citation>
    <scope>INVOLVEMENT IN CORD16</scope>
    <scope>INVOLVEMENT IN RP64</scope>
    <scope>VARIANT CORD16 TRP-177</scope>
    <scope>VARIANT RP64 ARG-182</scope>
    <scope>SUBCELLULAR LOCATION</scope>
    <scope>TISSUE SPECIFICITY</scope>
</reference>
<reference key="6">
    <citation type="journal article" date="2016" name="Ophthalmic Genet.">
        <title>C8orf37 is mutated in Bardet-Biedl syndrome and constitutes a locus allelic to non-syndromic retinal dystrophies.</title>
        <authorList>
            <person name="Khan A.O."/>
            <person name="Decker E."/>
            <person name="Bachmann N."/>
            <person name="Bolz H.J."/>
            <person name="Bergmann C."/>
        </authorList>
    </citation>
    <scope>INVOLVEMENT IN BBS21</scope>
    <scope>VARIANT BBS21 TRP-177</scope>
</reference>
<reference key="7">
    <citation type="journal article" date="2016" name="Hum. Mol. Genet.">
        <title>Mutations in C8ORF37 cause Bardet Biedl syndrome (BBS21).</title>
        <authorList>
            <person name="Heon E."/>
            <person name="Kim G."/>
            <person name="Qin S."/>
            <person name="Garrison J.E."/>
            <person name="Tavares E."/>
            <person name="Vincent A."/>
            <person name="Nuangchamnong N."/>
            <person name="Scott C.A."/>
            <person name="Slusarski D.C."/>
            <person name="Sheffield V.C."/>
        </authorList>
    </citation>
    <scope>INVOLVEMENT IN BBS21</scope>
</reference>
<reference key="8">
    <citation type="journal article" date="2022" name="Int. J. Mol. Sci.">
        <title>Interactions between C8orf37 and FAM161A, Two Ciliary Proteins Essential for Photoreceptor Survival.</title>
        <authorList>
            <person name="Liu Y."/>
            <person name="Chen J."/>
            <person name="Sager R."/>
            <person name="Sasaki E."/>
            <person name="Hu H."/>
        </authorList>
    </citation>
    <scope>CHARACTERIZATION OF VARIANTS CORD16/BBS21 TRP-177 AND RP64 TRP-182</scope>
    <scope>INTERACTION WITH FAM161A</scope>
</reference>
<keyword id="KW-0083">Bardet-Biedl syndrome</keyword>
<keyword id="KW-1186">Ciliopathy</keyword>
<keyword id="KW-0182">Cone-rod dystrophy</keyword>
<keyword id="KW-0963">Cytoplasm</keyword>
<keyword id="KW-0225">Disease variant</keyword>
<keyword id="KW-0550">Obesity</keyword>
<keyword id="KW-1267">Proteomics identification</keyword>
<keyword id="KW-1185">Reference proteome</keyword>
<keyword id="KW-0682">Retinitis pigmentosa</keyword>
<organism>
    <name type="scientific">Homo sapiens</name>
    <name type="common">Human</name>
    <dbReference type="NCBI Taxonomy" id="9606"/>
    <lineage>
        <taxon>Eukaryota</taxon>
        <taxon>Metazoa</taxon>
        <taxon>Chordata</taxon>
        <taxon>Craniata</taxon>
        <taxon>Vertebrata</taxon>
        <taxon>Euteleostomi</taxon>
        <taxon>Mammalia</taxon>
        <taxon>Eutheria</taxon>
        <taxon>Euarchontoglires</taxon>
        <taxon>Primates</taxon>
        <taxon>Haplorrhini</taxon>
        <taxon>Catarrhini</taxon>
        <taxon>Hominidae</taxon>
        <taxon>Homo</taxon>
    </lineage>
</organism>
<name>CF418_HUMAN</name>
<sequence length="207" mass="23381">MAEDLDELLDEVESKFCTPDLLRRGMVEQPKGCGGGTHSSDRNQAKAKETLRSTETFKKEDDLDSLINEILEEPNLDKKPSKLKSKSSGNTSVRASIEGLGKSCSPVYLGGSSIPCGIGTNISWRACDHLRCIACDFLVVSYDDYMWDKSCDYLFFRNNMPEFHKLKAKLIKKKGTRAYACQCSWRTIEEVTDLQTDHQLRWVCGKH</sequence>
<comment type="function">
    <text evidence="1">May be involved in photoreceptor outer segment disk morphogenesis (By similarity).</text>
</comment>
<comment type="subunit">
    <text evidence="6">Interacts (via N-terminus) with FAM161A (via central region); the interaction is direct.</text>
</comment>
<comment type="interaction">
    <interactant intactId="EBI-11904873">
        <id>Q96NL8</id>
    </interactant>
    <interactant intactId="EBI-711828">
        <id>P04632</id>
        <label>CAPNS1</label>
    </interactant>
    <organismsDiffer>false</organismsDiffer>
    <experiments>2</experiments>
</comment>
<comment type="interaction">
    <interactant intactId="EBI-11904873">
        <id>Q96NL8</id>
    </interactant>
    <interactant intactId="EBI-719941">
        <id>Q3B820</id>
        <label>FAM161A</label>
    </interactant>
    <organismsDiffer>false</organismsDiffer>
    <experiments>5</experiments>
</comment>
<comment type="subcellular location">
    <subcellularLocation>
        <location evidence="1">Cytoplasm</location>
    </subcellularLocation>
    <subcellularLocation>
        <location evidence="1">Photoreceptor inner segment</location>
    </subcellularLocation>
    <text evidence="1 3">In the retina, located at the base of the primary cilium (PubMed:22177090). Expressed throughout photoreceptors cell body including the basal body, inner segment and synaptic terminus, but not in the outer segment.</text>
</comment>
<comment type="tissue specificity">
    <text evidence="3">Widely expressed, with highest levels in heart and brain. Also expressed in the retina (at protein level).</text>
</comment>
<comment type="disease" evidence="3 6">
    <disease id="DI-03355">
        <name>Cone-rod dystrophy 16</name>
        <acronym>CORD16</acronym>
        <description>An inherited retinal dystrophy characterized by retinal pigment deposits visible on fundus examination, predominantly in the macular region, and initial loss of cone photoreceptors followed by rod degeneration. This leads to decreased visual acuity and sensitivity in the central visual field, followed by loss of peripheral vision. Severe loss of vision occurs earlier than in retinitis pigmentosa, due to cone photoreceptors degenerating at a higher rate than rod photoreceptors.</description>
        <dbReference type="MIM" id="614500"/>
    </disease>
    <text>The disease is caused by variants affecting the gene represented in this entry.</text>
</comment>
<comment type="disease" evidence="3 6">
    <disease id="DI-03356">
        <name>Retinitis pigmentosa 64</name>
        <acronym>RP64</acronym>
        <description>A retinal dystrophy belonging to the group of pigmentary retinopathies. Retinitis pigmentosa is characterized by retinal pigment deposits visible on fundus examination and primary loss of rod photoreceptor cells followed by secondary loss of cone photoreceptors. Patients typically have night vision blindness and loss of midperipheral visual field. As their condition progresses, they lose their far peripheral visual field and eventually central vision as well.</description>
        <dbReference type="MIM" id="614500"/>
    </disease>
    <text>The disease is caused by variants affecting the gene represented in this entry.</text>
</comment>
<comment type="disease" evidence="4 5 6">
    <disease id="DI-04960">
        <name>Bardet-Biedl syndrome 21</name>
        <acronym>BBS21</acronym>
        <description>A form of Bardet-Biedl syndrome, a syndrome characterized by usually severe pigmentary retinopathy, early-onset obesity, polydactyly, hypogenitalism, renal malformation and intellectual disability. Secondary features include diabetes mellitus, hypertension and congenital heart disease. Bardet-Biedl syndrome inheritance is autosomal recessive, but three mutated alleles (two at one locus, and a third at a second locus) may be required for clinical manifestation of some forms of the disease.</description>
        <dbReference type="MIM" id="617406"/>
    </disease>
    <text>The disease is caused by variants affecting the gene represented in this entry.</text>
</comment>
<protein>
    <recommendedName>
        <fullName evidence="7">Cilia- and flagella-associated protein 418</fullName>
    </recommendedName>
</protein>